<keyword id="KW-0027">Amidation</keyword>
<keyword id="KW-0903">Direct protein sequencing</keyword>
<keyword id="KW-0527">Neuropeptide</keyword>
<keyword id="KW-0964">Secreted</keyword>
<protein>
    <recommendedName>
        <fullName>Periviscerokinin-2.2</fullName>
    </recommendedName>
    <alternativeName>
        <fullName>Lem-PVK-2-like peptide</fullName>
    </alternativeName>
    <alternativeName>
        <fullName>Periviscerokinin-2</fullName>
        <shortName>SheLa-PVK-2</shortName>
    </alternativeName>
</protein>
<evidence type="ECO:0000255" key="1"/>
<evidence type="ECO:0000269" key="2">
    <source>
    </source>
</evidence>
<evidence type="ECO:0000269" key="3">
    <source>
    </source>
</evidence>
<evidence type="ECO:0000305" key="4"/>
<sequence>GSSGLISMPRV</sequence>
<reference evidence="4" key="1">
    <citation type="journal article" date="2005" name="Peptides">
        <title>Peptidomics of neurohemal organs from species of the cockroach family Blattidae: how do neuropeptides of closely related species differ?</title>
        <authorList>
            <person name="Predel R."/>
            <person name="Gaede G."/>
        </authorList>
    </citation>
    <scope>PROTEIN SEQUENCE</scope>
    <scope>MASS SPECTROMETRY</scope>
    <scope>AMIDATION AT VAL-11</scope>
    <source>
        <tissue evidence="2">Abdominal perisympathetic organs</tissue>
    </source>
</reference>
<reference key="2">
    <citation type="journal article" date="2009" name="BMC Evol. Biol.">
        <title>A proteomic approach for studying insect phylogeny: CAPA peptides of ancient insect taxa (Dictyoptera, Blattoptera) as a test case.</title>
        <authorList>
            <person name="Roth S."/>
            <person name="Fromm B."/>
            <person name="Gaede G."/>
            <person name="Predel R."/>
        </authorList>
    </citation>
    <scope>PROTEIN SEQUENCE</scope>
    <scope>AMIDATION AT VAL-11</scope>
    <source>
        <tissue>Abdominal perisympathetic organs</tissue>
    </source>
</reference>
<comment type="function">
    <text evidence="4">Mediates visceral muscle contractile activity (myotropic activity).</text>
</comment>
<comment type="subcellular location">
    <subcellularLocation>
        <location evidence="4">Secreted</location>
    </subcellularLocation>
</comment>
<comment type="mass spectrometry"/>
<comment type="similarity">
    <text evidence="1">Belongs to the periviscerokinin family.</text>
</comment>
<proteinExistence type="evidence at protein level"/>
<feature type="peptide" id="PRO_0000044280" description="Periviscerokinin-2.2">
    <location>
        <begin position="1"/>
        <end position="11"/>
    </location>
</feature>
<feature type="modified residue" description="Valine amide" evidence="2 3">
    <location>
        <position position="11"/>
    </location>
</feature>
<name>PVK22_SHELA</name>
<accession>P84427</accession>
<dbReference type="GO" id="GO:0005576">
    <property type="term" value="C:extracellular region"/>
    <property type="evidence" value="ECO:0007669"/>
    <property type="project" value="UniProtKB-SubCell"/>
</dbReference>
<dbReference type="GO" id="GO:0007218">
    <property type="term" value="P:neuropeptide signaling pathway"/>
    <property type="evidence" value="ECO:0007669"/>
    <property type="project" value="UniProtKB-KW"/>
</dbReference>
<dbReference type="InterPro" id="IPR013231">
    <property type="entry name" value="Periviscerokinin"/>
</dbReference>
<dbReference type="Pfam" id="PF08259">
    <property type="entry name" value="Periviscerokin"/>
    <property type="match status" value="1"/>
</dbReference>
<organism>
    <name type="scientific">Shelfordella lateralis</name>
    <name type="common">Turkestan cockroach</name>
    <name type="synonym">Periplaneta lateralis</name>
    <dbReference type="NCBI Taxonomy" id="36981"/>
    <lineage>
        <taxon>Eukaryota</taxon>
        <taxon>Metazoa</taxon>
        <taxon>Ecdysozoa</taxon>
        <taxon>Arthropoda</taxon>
        <taxon>Hexapoda</taxon>
        <taxon>Insecta</taxon>
        <taxon>Pterygota</taxon>
        <taxon>Neoptera</taxon>
        <taxon>Polyneoptera</taxon>
        <taxon>Dictyoptera</taxon>
        <taxon>Blattodea</taxon>
        <taxon>Blattoidea</taxon>
        <taxon>Blattidae</taxon>
        <taxon>Blattinae</taxon>
        <taxon>Periplaneta</taxon>
    </lineage>
</organism>